<gene>
    <name evidence="1" type="primary">phnC</name>
    <name type="ordered locus">FN1136</name>
</gene>
<accession>Q8REG7</accession>
<keyword id="KW-0067">ATP-binding</keyword>
<keyword id="KW-0997">Cell inner membrane</keyword>
<keyword id="KW-1003">Cell membrane</keyword>
<keyword id="KW-0472">Membrane</keyword>
<keyword id="KW-0547">Nucleotide-binding</keyword>
<keyword id="KW-0918">Phosphonate transport</keyword>
<keyword id="KW-1185">Reference proteome</keyword>
<keyword id="KW-1278">Translocase</keyword>
<keyword id="KW-0813">Transport</keyword>
<comment type="function">
    <text evidence="1">Part of the ABC transporter complex PhnCDE involved in phosphonates import. Responsible for energy coupling to the transport system.</text>
</comment>
<comment type="catalytic activity">
    <reaction evidence="1">
        <text>phosphonate(out) + ATP + H2O = phosphonate(in) + ADP + phosphate + H(+)</text>
        <dbReference type="Rhea" id="RHEA:18065"/>
        <dbReference type="ChEBI" id="CHEBI:15377"/>
        <dbReference type="ChEBI" id="CHEBI:15378"/>
        <dbReference type="ChEBI" id="CHEBI:16215"/>
        <dbReference type="ChEBI" id="CHEBI:30616"/>
        <dbReference type="ChEBI" id="CHEBI:43474"/>
        <dbReference type="ChEBI" id="CHEBI:456216"/>
        <dbReference type="EC" id="7.3.2.2"/>
    </reaction>
</comment>
<comment type="subunit">
    <text evidence="1">The complex is composed of two ATP-binding proteins (PhnC), two transmembrane proteins (PhnE) and a solute-binding protein (PhnD).</text>
</comment>
<comment type="subcellular location">
    <subcellularLocation>
        <location evidence="1">Cell inner membrane</location>
        <topology evidence="1">Peripheral membrane protein</topology>
    </subcellularLocation>
</comment>
<comment type="similarity">
    <text evidence="1">Belongs to the ABC transporter superfamily. Phosphonates importer (TC 3.A.1.9.1) family.</text>
</comment>
<name>PHNC_FUSNN</name>
<feature type="chain" id="PRO_0000092709" description="Phosphonates import ATP-binding protein PhnC">
    <location>
        <begin position="1"/>
        <end position="247"/>
    </location>
</feature>
<feature type="domain" description="ABC transporter" evidence="1">
    <location>
        <begin position="5"/>
        <end position="246"/>
    </location>
</feature>
<feature type="binding site" evidence="1">
    <location>
        <begin position="37"/>
        <end position="44"/>
    </location>
    <ligand>
        <name>ATP</name>
        <dbReference type="ChEBI" id="CHEBI:30616"/>
    </ligand>
</feature>
<dbReference type="EC" id="7.3.2.2" evidence="1"/>
<dbReference type="EMBL" id="AE009951">
    <property type="protein sequence ID" value="AAL95332.1"/>
    <property type="molecule type" value="Genomic_DNA"/>
</dbReference>
<dbReference type="RefSeq" id="NP_604033.1">
    <property type="nucleotide sequence ID" value="NC_003454.1"/>
</dbReference>
<dbReference type="RefSeq" id="WP_011016928.1">
    <property type="nucleotide sequence ID" value="NZ_CP028101.1"/>
</dbReference>
<dbReference type="SMR" id="Q8REG7"/>
<dbReference type="STRING" id="190304.FN1136"/>
<dbReference type="PaxDb" id="190304-FN1136"/>
<dbReference type="EnsemblBacteria" id="AAL95332">
    <property type="protein sequence ID" value="AAL95332"/>
    <property type="gene ID" value="FN1136"/>
</dbReference>
<dbReference type="GeneID" id="79784116"/>
<dbReference type="KEGG" id="fnu:FN1136"/>
<dbReference type="PATRIC" id="fig|190304.8.peg.1701"/>
<dbReference type="eggNOG" id="COG3638">
    <property type="taxonomic scope" value="Bacteria"/>
</dbReference>
<dbReference type="HOGENOM" id="CLU_000604_1_22_0"/>
<dbReference type="InParanoid" id="Q8REG7"/>
<dbReference type="BioCyc" id="FNUC190304:G1FZS-1716-MONOMER"/>
<dbReference type="Proteomes" id="UP000002521">
    <property type="component" value="Chromosome"/>
</dbReference>
<dbReference type="GO" id="GO:0005886">
    <property type="term" value="C:plasma membrane"/>
    <property type="evidence" value="ECO:0007669"/>
    <property type="project" value="UniProtKB-SubCell"/>
</dbReference>
<dbReference type="GO" id="GO:0015416">
    <property type="term" value="F:ABC-type phosphonate transporter activity"/>
    <property type="evidence" value="ECO:0007669"/>
    <property type="project" value="UniProtKB-EC"/>
</dbReference>
<dbReference type="GO" id="GO:0005524">
    <property type="term" value="F:ATP binding"/>
    <property type="evidence" value="ECO:0007669"/>
    <property type="project" value="UniProtKB-KW"/>
</dbReference>
<dbReference type="GO" id="GO:0016887">
    <property type="term" value="F:ATP hydrolysis activity"/>
    <property type="evidence" value="ECO:0007669"/>
    <property type="project" value="InterPro"/>
</dbReference>
<dbReference type="CDD" id="cd03256">
    <property type="entry name" value="ABC_PhnC_transporter"/>
    <property type="match status" value="1"/>
</dbReference>
<dbReference type="Gene3D" id="3.40.50.300">
    <property type="entry name" value="P-loop containing nucleotide triphosphate hydrolases"/>
    <property type="match status" value="1"/>
</dbReference>
<dbReference type="InterPro" id="IPR003593">
    <property type="entry name" value="AAA+_ATPase"/>
</dbReference>
<dbReference type="InterPro" id="IPR003439">
    <property type="entry name" value="ABC_transporter-like_ATP-bd"/>
</dbReference>
<dbReference type="InterPro" id="IPR017871">
    <property type="entry name" value="ABC_transporter-like_CS"/>
</dbReference>
<dbReference type="InterPro" id="IPR012693">
    <property type="entry name" value="ABC_transpr_PhnC"/>
</dbReference>
<dbReference type="InterPro" id="IPR050086">
    <property type="entry name" value="MetN_ABC_transporter-like"/>
</dbReference>
<dbReference type="InterPro" id="IPR027417">
    <property type="entry name" value="P-loop_NTPase"/>
</dbReference>
<dbReference type="NCBIfam" id="TIGR02315">
    <property type="entry name" value="ABC_phnC"/>
    <property type="match status" value="1"/>
</dbReference>
<dbReference type="PANTHER" id="PTHR43166">
    <property type="entry name" value="AMINO ACID IMPORT ATP-BINDING PROTEIN"/>
    <property type="match status" value="1"/>
</dbReference>
<dbReference type="PANTHER" id="PTHR43166:SF4">
    <property type="entry name" value="PHOSPHONATES IMPORT ATP-BINDING PROTEIN PHNC"/>
    <property type="match status" value="1"/>
</dbReference>
<dbReference type="Pfam" id="PF00005">
    <property type="entry name" value="ABC_tran"/>
    <property type="match status" value="1"/>
</dbReference>
<dbReference type="SMART" id="SM00382">
    <property type="entry name" value="AAA"/>
    <property type="match status" value="1"/>
</dbReference>
<dbReference type="SUPFAM" id="SSF52540">
    <property type="entry name" value="P-loop containing nucleoside triphosphate hydrolases"/>
    <property type="match status" value="1"/>
</dbReference>
<dbReference type="PROSITE" id="PS00211">
    <property type="entry name" value="ABC_TRANSPORTER_1"/>
    <property type="match status" value="1"/>
</dbReference>
<dbReference type="PROSITE" id="PS50893">
    <property type="entry name" value="ABC_TRANSPORTER_2"/>
    <property type="match status" value="1"/>
</dbReference>
<dbReference type="PROSITE" id="PS51249">
    <property type="entry name" value="PHNC"/>
    <property type="match status" value="1"/>
</dbReference>
<protein>
    <recommendedName>
        <fullName evidence="1">Phosphonates import ATP-binding protein PhnC</fullName>
        <ecNumber evidence="1">7.3.2.2</ecNumber>
    </recommendedName>
</protein>
<sequence length="247" mass="28250">METIIEVKNLVKNYGDKQILKNISFNINKGEIISIIGESGAGKSTLMRCLNGLEGINSGSIKFYDTDITKLKEKEKNSIKKQMAYVFQDLNIIDNMYVIENVLVPFLNRKNFIQVLFNQFSKQEYERALYCLEKVGISKLAYTKAKYLSGGEKQRVAIARSLAPNVDLILADEPISSLDEKNSTQIMEIFKRINIKKNKTIILNLHNVEIAKKFSDKILALKNGEIFFYKKSAEVNEDDIRKVYQTS</sequence>
<proteinExistence type="inferred from homology"/>
<evidence type="ECO:0000255" key="1">
    <source>
        <dbReference type="HAMAP-Rule" id="MF_01713"/>
    </source>
</evidence>
<organism>
    <name type="scientific">Fusobacterium nucleatum subsp. nucleatum (strain ATCC 25586 / DSM 15643 / BCRC 10681 / CIP 101130 / JCM 8532 / KCTC 2640 / LMG 13131 / VPI 4355)</name>
    <dbReference type="NCBI Taxonomy" id="190304"/>
    <lineage>
        <taxon>Bacteria</taxon>
        <taxon>Fusobacteriati</taxon>
        <taxon>Fusobacteriota</taxon>
        <taxon>Fusobacteriia</taxon>
        <taxon>Fusobacteriales</taxon>
        <taxon>Fusobacteriaceae</taxon>
        <taxon>Fusobacterium</taxon>
    </lineage>
</organism>
<reference key="1">
    <citation type="journal article" date="2002" name="J. Bacteriol.">
        <title>Genome sequence and analysis of the oral bacterium Fusobacterium nucleatum strain ATCC 25586.</title>
        <authorList>
            <person name="Kapatral V."/>
            <person name="Anderson I."/>
            <person name="Ivanova N."/>
            <person name="Reznik G."/>
            <person name="Los T."/>
            <person name="Lykidis A."/>
            <person name="Bhattacharyya A."/>
            <person name="Bartman A."/>
            <person name="Gardner W."/>
            <person name="Grechkin G."/>
            <person name="Zhu L."/>
            <person name="Vasieva O."/>
            <person name="Chu L."/>
            <person name="Kogan Y."/>
            <person name="Chaga O."/>
            <person name="Goltsman E."/>
            <person name="Bernal A."/>
            <person name="Larsen N."/>
            <person name="D'Souza M."/>
            <person name="Walunas T."/>
            <person name="Pusch G."/>
            <person name="Haselkorn R."/>
            <person name="Fonstein M."/>
            <person name="Kyrpides N.C."/>
            <person name="Overbeek R."/>
        </authorList>
    </citation>
    <scope>NUCLEOTIDE SEQUENCE [LARGE SCALE GENOMIC DNA]</scope>
    <source>
        <strain>ATCC 25586 / DSM 15643 / BCRC 10681 / CIP 101130 / JCM 8532 / KCTC 2640 / LMG 13131 / VPI 4355</strain>
    </source>
</reference>